<accession>P67805</accession>
<accession>B4QSX6</accession>
<accession>P30105</accession>
<accession>Q963F1</accession>
<reference key="1">
    <citation type="submission" date="2001-05" db="EMBL/GenBank/DDBJ databases">
        <title>Cloning of the Drosophila simulans glutathione S-transferase D1.</title>
        <authorList>
            <person name="Le Goff G."/>
            <person name="Berge J.-B."/>
            <person name="Amichot M."/>
        </authorList>
    </citation>
    <scope>NUCLEOTIDE SEQUENCE [MRNA]</scope>
</reference>
<reference key="2">
    <citation type="journal article" date="2007" name="Nature">
        <title>Evolution of genes and genomes on the Drosophila phylogeny.</title>
        <authorList>
            <consortium name="Drosophila 12 genomes consortium"/>
        </authorList>
    </citation>
    <scope>NUCLEOTIDE SEQUENCE [LARGE SCALE GENOMIC DNA]</scope>
</reference>
<reference key="3">
    <citation type="submission" date="1992-02" db="EMBL/GenBank/DDBJ databases">
        <title>Sequence divergence of glutathione S-transferase coding regions among seven species in the melanogaster subgroup of Drosophila.</title>
        <authorList>
            <person name="Hargis M.T."/>
            <person name="Cochrane B.J."/>
        </authorList>
    </citation>
    <scope>NUCLEOTIDE SEQUENCE [GENOMIC DNA] OF 9-208</scope>
</reference>
<evidence type="ECO:0000250" key="1"/>
<evidence type="ECO:0000305" key="2"/>
<comment type="function">
    <text evidence="1">Conjugation of reduced glutathione to a wide number of exogenous and endogenous hydrophobic electrophiles. Has DDT dehydrochlorinase activity (By similarity).</text>
</comment>
<comment type="catalytic activity">
    <reaction>
        <text>RX + glutathione = an S-substituted glutathione + a halide anion + H(+)</text>
        <dbReference type="Rhea" id="RHEA:16437"/>
        <dbReference type="ChEBI" id="CHEBI:15378"/>
        <dbReference type="ChEBI" id="CHEBI:16042"/>
        <dbReference type="ChEBI" id="CHEBI:17792"/>
        <dbReference type="ChEBI" id="CHEBI:57925"/>
        <dbReference type="ChEBI" id="CHEBI:90779"/>
        <dbReference type="EC" id="2.5.1.18"/>
    </reaction>
</comment>
<comment type="catalytic activity">
    <reaction>
        <text>1,1,1-trichloro-2,2-bis(4-chlorophenyl)ethane = 1,1-dichloro-2,2-bis(4-chlorophenyl)ethylene + chloride + H(+)</text>
        <dbReference type="Rhea" id="RHEA:19217"/>
        <dbReference type="ChEBI" id="CHEBI:15378"/>
        <dbReference type="ChEBI" id="CHEBI:16130"/>
        <dbReference type="ChEBI" id="CHEBI:16598"/>
        <dbReference type="ChEBI" id="CHEBI:17996"/>
        <dbReference type="EC" id="4.5.1.1"/>
    </reaction>
</comment>
<comment type="subunit">
    <text>Homodimer.</text>
</comment>
<comment type="similarity">
    <text evidence="2">Belongs to the GST superfamily. Theta family.</text>
</comment>
<organism>
    <name type="scientific">Drosophila simulans</name>
    <name type="common">Fruit fly</name>
    <dbReference type="NCBI Taxonomy" id="7240"/>
    <lineage>
        <taxon>Eukaryota</taxon>
        <taxon>Metazoa</taxon>
        <taxon>Ecdysozoa</taxon>
        <taxon>Arthropoda</taxon>
        <taxon>Hexapoda</taxon>
        <taxon>Insecta</taxon>
        <taxon>Pterygota</taxon>
        <taxon>Neoptera</taxon>
        <taxon>Endopterygota</taxon>
        <taxon>Diptera</taxon>
        <taxon>Brachycera</taxon>
        <taxon>Muscomorpha</taxon>
        <taxon>Ephydroidea</taxon>
        <taxon>Drosophilidae</taxon>
        <taxon>Drosophila</taxon>
        <taxon>Sophophora</taxon>
    </lineage>
</organism>
<feature type="chain" id="PRO_0000185951" description="Glutathione S-transferase 1-1">
    <location>
        <begin position="1"/>
        <end position="209"/>
    </location>
</feature>
<feature type="domain" description="GST N-terminal">
    <location>
        <begin position="1"/>
        <end position="81"/>
    </location>
</feature>
<feature type="domain" description="GST C-terminal">
    <location>
        <begin position="87"/>
        <end position="209"/>
    </location>
</feature>
<feature type="binding site" evidence="1">
    <location>
        <position position="10"/>
    </location>
    <ligand>
        <name>glutathione</name>
        <dbReference type="ChEBI" id="CHEBI:57925"/>
    </ligand>
</feature>
<feature type="binding site" evidence="1">
    <location>
        <begin position="51"/>
        <end position="53"/>
    </location>
    <ligand>
        <name>glutathione</name>
        <dbReference type="ChEBI" id="CHEBI:57925"/>
    </ligand>
</feature>
<feature type="binding site" evidence="1">
    <location>
        <begin position="65"/>
        <end position="67"/>
    </location>
    <ligand>
        <name>glutathione</name>
        <dbReference type="ChEBI" id="CHEBI:57925"/>
    </ligand>
</feature>
<feature type="sequence conflict" description="In Ref. 1; AAK66764." evidence="2" ref="1">
    <original>A</original>
    <variation>V</variation>
    <location>
        <position position="2"/>
    </location>
</feature>
<feature type="sequence conflict" description="In Ref. 3; M84577." evidence="2" ref="3">
    <original>E</original>
    <variation>S</variation>
    <location>
        <position position="195"/>
    </location>
</feature>
<feature type="sequence conflict" description="In Ref. 3; M84577." evidence="2" ref="3">
    <original>Y</original>
    <variation>F</variation>
    <location>
        <position position="207"/>
    </location>
</feature>
<keyword id="KW-0456">Lyase</keyword>
<keyword id="KW-1185">Reference proteome</keyword>
<keyword id="KW-0808">Transferase</keyword>
<proteinExistence type="evidence at transcript level"/>
<name>GSTT1_DROSI</name>
<sequence length="209" mass="23755">MADFYYLPGSSPCRSVIMTAKAVGVELNKKLLNLQAGEHLKPEFLKINPQHTIPTLVDNGFALWESRAIQVYLVEKYGKTDSLYPKCPKKRAVINQRLYFDMGTLYQSFANYYYPQVFAKAPADPEAFKKIESAFEFLNTFLEGQEYAAGDSLTVADIALVASVSTFEVAGFEISKYANVNKWYENAKKVTPGWEENWAGCLEFKKYFE</sequence>
<gene>
    <name type="primary">GstD1</name>
    <name type="synonym">gst</name>
    <name type="synonym">GST1</name>
    <name type="ORF">GD20577</name>
</gene>
<dbReference type="EC" id="2.5.1.18"/>
<dbReference type="EC" id="4.5.1.1"/>
<dbReference type="EMBL" id="AF386788">
    <property type="protein sequence ID" value="AAK66764.1"/>
    <property type="molecule type" value="mRNA"/>
</dbReference>
<dbReference type="EMBL" id="CM000364">
    <property type="protein sequence ID" value="EDX13236.1"/>
    <property type="molecule type" value="Genomic_DNA"/>
</dbReference>
<dbReference type="EMBL" id="M84577">
    <property type="status" value="NOT_ANNOTATED_CDS"/>
    <property type="molecule type" value="Genomic_DNA"/>
</dbReference>
<dbReference type="SMR" id="P67805"/>
<dbReference type="STRING" id="7240.P67805"/>
<dbReference type="EnsemblMetazoa" id="FBtr0220487">
    <property type="protein sequence ID" value="FBpp0218979"/>
    <property type="gene ID" value="FBgn0012838"/>
</dbReference>
<dbReference type="EnsemblMetazoa" id="XM_016176848.2">
    <property type="protein sequence ID" value="XP_016034993.2"/>
    <property type="gene ID" value="LOC6728385"/>
</dbReference>
<dbReference type="HOGENOM" id="CLU_011226_2_1_1"/>
<dbReference type="OMA" id="CPQRVMV"/>
<dbReference type="OrthoDB" id="2309723at2759"/>
<dbReference type="PhylomeDB" id="P67805"/>
<dbReference type="ChiTaRS" id="GstS1">
    <property type="organism name" value="fly"/>
</dbReference>
<dbReference type="Proteomes" id="UP000000304">
    <property type="component" value="Chromosome 3R"/>
</dbReference>
<dbReference type="Bgee" id="FBgn0012838">
    <property type="expression patterns" value="Expressed in female reproductive system and 3 other cell types or tissues"/>
</dbReference>
<dbReference type="GO" id="GO:0018833">
    <property type="term" value="F:DDT-dehydrochlorinase activity"/>
    <property type="evidence" value="ECO:0000314"/>
    <property type="project" value="FlyBase"/>
</dbReference>
<dbReference type="GO" id="GO:0004602">
    <property type="term" value="F:glutathione peroxidase activity"/>
    <property type="evidence" value="ECO:0007669"/>
    <property type="project" value="EnsemblMetazoa"/>
</dbReference>
<dbReference type="GO" id="GO:0004364">
    <property type="term" value="F:glutathione transferase activity"/>
    <property type="evidence" value="ECO:0007669"/>
    <property type="project" value="UniProtKB-EC"/>
</dbReference>
<dbReference type="GO" id="GO:0006749">
    <property type="term" value="P:glutathione metabolic process"/>
    <property type="evidence" value="ECO:0007669"/>
    <property type="project" value="EnsemblMetazoa"/>
</dbReference>
<dbReference type="CDD" id="cd03177">
    <property type="entry name" value="GST_C_Delta_Epsilon"/>
    <property type="match status" value="1"/>
</dbReference>
<dbReference type="CDD" id="cd03045">
    <property type="entry name" value="GST_N_Delta_Epsilon"/>
    <property type="match status" value="1"/>
</dbReference>
<dbReference type="FunFam" id="3.40.30.10:FF:000034">
    <property type="entry name" value="glutathione S-transferase 1"/>
    <property type="match status" value="1"/>
</dbReference>
<dbReference type="FunFam" id="1.20.1050.10:FF:000007">
    <property type="entry name" value="Glutathione S-transferase 1-1"/>
    <property type="match status" value="1"/>
</dbReference>
<dbReference type="Gene3D" id="1.20.1050.10">
    <property type="match status" value="1"/>
</dbReference>
<dbReference type="Gene3D" id="3.40.30.10">
    <property type="entry name" value="Glutaredoxin"/>
    <property type="match status" value="1"/>
</dbReference>
<dbReference type="InterPro" id="IPR010987">
    <property type="entry name" value="Glutathione-S-Trfase_C-like"/>
</dbReference>
<dbReference type="InterPro" id="IPR036282">
    <property type="entry name" value="Glutathione-S-Trfase_C_sf"/>
</dbReference>
<dbReference type="InterPro" id="IPR040079">
    <property type="entry name" value="Glutathione_S-Trfase"/>
</dbReference>
<dbReference type="InterPro" id="IPR004045">
    <property type="entry name" value="Glutathione_S-Trfase_N"/>
</dbReference>
<dbReference type="InterPro" id="IPR004046">
    <property type="entry name" value="GST_C"/>
</dbReference>
<dbReference type="InterPro" id="IPR036249">
    <property type="entry name" value="Thioredoxin-like_sf"/>
</dbReference>
<dbReference type="PANTHER" id="PTHR43969">
    <property type="entry name" value="GLUTATHIONE S TRANSFERASE D10, ISOFORM A-RELATED"/>
    <property type="match status" value="1"/>
</dbReference>
<dbReference type="PANTHER" id="PTHR43969:SF9">
    <property type="entry name" value="GLUTATHIONE S TRANSFERASE D10, ISOFORM A-RELATED"/>
    <property type="match status" value="1"/>
</dbReference>
<dbReference type="Pfam" id="PF00043">
    <property type="entry name" value="GST_C"/>
    <property type="match status" value="1"/>
</dbReference>
<dbReference type="Pfam" id="PF02798">
    <property type="entry name" value="GST_N"/>
    <property type="match status" value="1"/>
</dbReference>
<dbReference type="SFLD" id="SFLDS00019">
    <property type="entry name" value="Glutathione_Transferase_(cytos"/>
    <property type="match status" value="1"/>
</dbReference>
<dbReference type="SFLD" id="SFLDG01153">
    <property type="entry name" value="Main.4:_Theta-like"/>
    <property type="match status" value="1"/>
</dbReference>
<dbReference type="SUPFAM" id="SSF47616">
    <property type="entry name" value="GST C-terminal domain-like"/>
    <property type="match status" value="1"/>
</dbReference>
<dbReference type="SUPFAM" id="SSF52833">
    <property type="entry name" value="Thioredoxin-like"/>
    <property type="match status" value="1"/>
</dbReference>
<dbReference type="PROSITE" id="PS50405">
    <property type="entry name" value="GST_CTER"/>
    <property type="match status" value="1"/>
</dbReference>
<dbReference type="PROSITE" id="PS50404">
    <property type="entry name" value="GST_NTER"/>
    <property type="match status" value="1"/>
</dbReference>
<protein>
    <recommendedName>
        <fullName>Glutathione S-transferase 1-1</fullName>
        <ecNumber>2.5.1.18</ecNumber>
        <ecNumber>4.5.1.1</ecNumber>
    </recommendedName>
    <alternativeName>
        <fullName>DDT-dehydrochlorinase</fullName>
    </alternativeName>
    <alternativeName>
        <fullName>GST class-theta</fullName>
    </alternativeName>
</protein>